<reference key="1">
    <citation type="journal article" date="2003" name="Proc. Natl. Acad. Sci. U.S.A.">
        <title>The complete genome sequence of Mycobacterium bovis.</title>
        <authorList>
            <person name="Garnier T."/>
            <person name="Eiglmeier K."/>
            <person name="Camus J.-C."/>
            <person name="Medina N."/>
            <person name="Mansoor H."/>
            <person name="Pryor M."/>
            <person name="Duthoy S."/>
            <person name="Grondin S."/>
            <person name="Lacroix C."/>
            <person name="Monsempe C."/>
            <person name="Simon S."/>
            <person name="Harris B."/>
            <person name="Atkin R."/>
            <person name="Doggett J."/>
            <person name="Mayes R."/>
            <person name="Keating L."/>
            <person name="Wheeler P.R."/>
            <person name="Parkhill J."/>
            <person name="Barrell B.G."/>
            <person name="Cole S.T."/>
            <person name="Gordon S.V."/>
            <person name="Hewinson R.G."/>
        </authorList>
    </citation>
    <scope>NUCLEOTIDE SEQUENCE [LARGE SCALE GENOMIC DNA]</scope>
    <source>
        <strain>ATCC BAA-935 / AF2122/97</strain>
    </source>
</reference>
<reference key="2">
    <citation type="journal article" date="2017" name="Genome Announc.">
        <title>Updated reference genome sequence and annotation of Mycobacterium bovis AF2122/97.</title>
        <authorList>
            <person name="Malone K.M."/>
            <person name="Farrell D."/>
            <person name="Stuber T.P."/>
            <person name="Schubert O.T."/>
            <person name="Aebersold R."/>
            <person name="Robbe-Austerman S."/>
            <person name="Gordon S.V."/>
        </authorList>
    </citation>
    <scope>NUCLEOTIDE SEQUENCE [LARGE SCALE GENOMIC DNA]</scope>
    <scope>GENOME REANNOTATION</scope>
    <source>
        <strain>ATCC BAA-935 / AF2122/97</strain>
    </source>
</reference>
<protein>
    <recommendedName>
        <fullName>Uncharacterized protein Mb0993</fullName>
    </recommendedName>
</protein>
<evidence type="ECO:0000256" key="1">
    <source>
        <dbReference type="SAM" id="MobiDB-lite"/>
    </source>
</evidence>
<evidence type="ECO:0000305" key="2"/>
<sequence>MVWHGFLAKAVPTVVTGAVGVAAYEALRKMVVKAPLRAATVSVAAWGIRLAREAERKAGESAEQARLMFADVLAEASERAGEEVPPLAVAGSDDGHDH</sequence>
<comment type="similarity">
    <text evidence="2">To M.tuberculosis Rv1991c and Rv3269.</text>
</comment>
<feature type="chain" id="PRO_0000103766" description="Uncharacterized protein Mb0993">
    <location>
        <begin position="1"/>
        <end position="98"/>
    </location>
</feature>
<feature type="region of interest" description="Disordered" evidence="1">
    <location>
        <begin position="77"/>
        <end position="98"/>
    </location>
</feature>
<name>Y993_MYCBO</name>
<gene>
    <name type="ordered locus">BQ2027_MB0993</name>
</gene>
<dbReference type="EMBL" id="LT708304">
    <property type="protein sequence ID" value="SIT99592.1"/>
    <property type="molecule type" value="Genomic_DNA"/>
</dbReference>
<dbReference type="RefSeq" id="NP_854650.1">
    <property type="nucleotide sequence ID" value="NC_002945.3"/>
</dbReference>
<dbReference type="RefSeq" id="WP_003404939.1">
    <property type="nucleotide sequence ID" value="NC_002945.4"/>
</dbReference>
<dbReference type="SMR" id="P64780"/>
<dbReference type="KEGG" id="mbo:BQ2027_MB0993"/>
<dbReference type="PATRIC" id="fig|233413.5.peg.1082"/>
<dbReference type="Proteomes" id="UP000001419">
    <property type="component" value="Chromosome"/>
</dbReference>
<dbReference type="InterPro" id="IPR009963">
    <property type="entry name" value="DUF1490"/>
</dbReference>
<dbReference type="Pfam" id="PF07371">
    <property type="entry name" value="DUF1490"/>
    <property type="match status" value="1"/>
</dbReference>
<accession>P64780</accession>
<accession>A0A1R3XZ26</accession>
<accession>P71542</accession>
<accession>X2BGN3</accession>
<organism>
    <name type="scientific">Mycobacterium bovis (strain ATCC BAA-935 / AF2122/97)</name>
    <dbReference type="NCBI Taxonomy" id="233413"/>
    <lineage>
        <taxon>Bacteria</taxon>
        <taxon>Bacillati</taxon>
        <taxon>Actinomycetota</taxon>
        <taxon>Actinomycetes</taxon>
        <taxon>Mycobacteriales</taxon>
        <taxon>Mycobacteriaceae</taxon>
        <taxon>Mycobacterium</taxon>
        <taxon>Mycobacterium tuberculosis complex</taxon>
    </lineage>
</organism>
<proteinExistence type="predicted"/>
<keyword id="KW-1185">Reference proteome</keyword>